<gene>
    <name type="primary">Rpp25</name>
</gene>
<dbReference type="EMBL" id="AK082822">
    <property type="protein sequence ID" value="BAC38636.1"/>
    <property type="molecule type" value="mRNA"/>
</dbReference>
<dbReference type="EMBL" id="BC016085">
    <property type="protein sequence ID" value="AAH16085.1"/>
    <property type="molecule type" value="mRNA"/>
</dbReference>
<dbReference type="EMBL" id="BC083064">
    <property type="protein sequence ID" value="AAH83064.1"/>
    <property type="molecule type" value="mRNA"/>
</dbReference>
<dbReference type="CCDS" id="CCDS23222.1"/>
<dbReference type="RefSeq" id="NP_598743.1">
    <property type="nucleotide sequence ID" value="NM_133982.1"/>
</dbReference>
<dbReference type="SMR" id="Q91WE3"/>
<dbReference type="BioGRID" id="221908">
    <property type="interactions" value="1"/>
</dbReference>
<dbReference type="FunCoup" id="Q91WE3">
    <property type="interactions" value="93"/>
</dbReference>
<dbReference type="STRING" id="10090.ENSMUSP00000079358"/>
<dbReference type="GlyGen" id="Q91WE3">
    <property type="glycosylation" value="1 site"/>
</dbReference>
<dbReference type="iPTMnet" id="Q91WE3"/>
<dbReference type="PhosphoSitePlus" id="Q91WE3"/>
<dbReference type="PaxDb" id="10090-ENSMUSP00000079358"/>
<dbReference type="PeptideAtlas" id="Q91WE3"/>
<dbReference type="ProteomicsDB" id="299928"/>
<dbReference type="Antibodypedia" id="50450">
    <property type="antibodies" value="92 antibodies from 23 providers"/>
</dbReference>
<dbReference type="DNASU" id="102614"/>
<dbReference type="Ensembl" id="ENSMUST00000080514.9">
    <property type="protein sequence ID" value="ENSMUSP00000079358.8"/>
    <property type="gene ID" value="ENSMUSG00000062309.9"/>
</dbReference>
<dbReference type="GeneID" id="102614"/>
<dbReference type="KEGG" id="mmu:102614"/>
<dbReference type="UCSC" id="uc009puy.1">
    <property type="organism name" value="mouse"/>
</dbReference>
<dbReference type="AGR" id="MGI:2143151"/>
<dbReference type="CTD" id="54913"/>
<dbReference type="MGI" id="MGI:2143151">
    <property type="gene designation" value="Rpp25"/>
</dbReference>
<dbReference type="VEuPathDB" id="HostDB:ENSMUSG00000062309"/>
<dbReference type="eggNOG" id="KOG2567">
    <property type="taxonomic scope" value="Eukaryota"/>
</dbReference>
<dbReference type="GeneTree" id="ENSGT00390000002564"/>
<dbReference type="HOGENOM" id="CLU_096311_0_0_1"/>
<dbReference type="InParanoid" id="Q91WE3"/>
<dbReference type="OMA" id="WENKDPQ"/>
<dbReference type="OrthoDB" id="424402at2759"/>
<dbReference type="PhylomeDB" id="Q91WE3"/>
<dbReference type="TreeFam" id="TF325688"/>
<dbReference type="Reactome" id="R-MMU-6791226">
    <property type="pathway name" value="Major pathway of rRNA processing in the nucleolus and cytosol"/>
</dbReference>
<dbReference type="BioGRID-ORCS" id="102614">
    <property type="hits" value="0 hits in 79 CRISPR screens"/>
</dbReference>
<dbReference type="PRO" id="PR:Q91WE3"/>
<dbReference type="Proteomes" id="UP000000589">
    <property type="component" value="Chromosome 9"/>
</dbReference>
<dbReference type="RNAct" id="Q91WE3">
    <property type="molecule type" value="protein"/>
</dbReference>
<dbReference type="Bgee" id="ENSMUSG00000062309">
    <property type="expression patterns" value="Expressed in epithelium of stomach and 117 other cell types or tissues"/>
</dbReference>
<dbReference type="GO" id="GO:0034451">
    <property type="term" value="C:centriolar satellite"/>
    <property type="evidence" value="ECO:0007669"/>
    <property type="project" value="Ensembl"/>
</dbReference>
<dbReference type="GO" id="GO:0030681">
    <property type="term" value="C:multimeric ribonuclease P complex"/>
    <property type="evidence" value="ECO:0000250"/>
    <property type="project" value="UniProtKB"/>
</dbReference>
<dbReference type="GO" id="GO:0005730">
    <property type="term" value="C:nucleolus"/>
    <property type="evidence" value="ECO:0007669"/>
    <property type="project" value="UniProtKB-SubCell"/>
</dbReference>
<dbReference type="GO" id="GO:0005654">
    <property type="term" value="C:nucleoplasm"/>
    <property type="evidence" value="ECO:0007669"/>
    <property type="project" value="Ensembl"/>
</dbReference>
<dbReference type="GO" id="GO:0000172">
    <property type="term" value="C:ribonuclease MRP complex"/>
    <property type="evidence" value="ECO:0007669"/>
    <property type="project" value="Ensembl"/>
</dbReference>
<dbReference type="GO" id="GO:0004526">
    <property type="term" value="F:ribonuclease P activity"/>
    <property type="evidence" value="ECO:0007669"/>
    <property type="project" value="UniProtKB-EC"/>
</dbReference>
<dbReference type="GO" id="GO:0033204">
    <property type="term" value="F:ribonuclease P RNA binding"/>
    <property type="evidence" value="ECO:0000250"/>
    <property type="project" value="UniProtKB"/>
</dbReference>
<dbReference type="GO" id="GO:0006364">
    <property type="term" value="P:rRNA processing"/>
    <property type="evidence" value="ECO:0007669"/>
    <property type="project" value="UniProtKB-KW"/>
</dbReference>
<dbReference type="GO" id="GO:0001682">
    <property type="term" value="P:tRNA 5'-leader removal"/>
    <property type="evidence" value="ECO:0000250"/>
    <property type="project" value="UniProtKB"/>
</dbReference>
<dbReference type="FunFam" id="3.30.110.20:FF:000006">
    <property type="entry name" value="Ribonuclease P protein subunit p25"/>
    <property type="match status" value="1"/>
</dbReference>
<dbReference type="Gene3D" id="3.30.110.20">
    <property type="entry name" value="Alba-like domain"/>
    <property type="match status" value="1"/>
</dbReference>
<dbReference type="InterPro" id="IPR036882">
    <property type="entry name" value="Alba-like_dom_sf"/>
</dbReference>
<dbReference type="InterPro" id="IPR051958">
    <property type="entry name" value="Alba-like_NAB"/>
</dbReference>
<dbReference type="InterPro" id="IPR002775">
    <property type="entry name" value="DNA/RNA-bd_Alba-like"/>
</dbReference>
<dbReference type="PANTHER" id="PTHR13516:SF5">
    <property type="entry name" value="RIBONUCLEASE P PROTEIN SUBUNIT P25"/>
    <property type="match status" value="1"/>
</dbReference>
<dbReference type="PANTHER" id="PTHR13516">
    <property type="entry name" value="RIBONUCLEASE P SUBUNIT P25"/>
    <property type="match status" value="1"/>
</dbReference>
<dbReference type="Pfam" id="PF01918">
    <property type="entry name" value="Alba"/>
    <property type="match status" value="1"/>
</dbReference>
<dbReference type="SUPFAM" id="SSF82704">
    <property type="entry name" value="AlbA-like"/>
    <property type="match status" value="1"/>
</dbReference>
<sequence length="199" mass="21038">MENFRKVRSEEAPAGDGDEGGSPNSGPFADLAPGAVHMRVKEGSKIRNLLAFATASMAQPATRAIVFSGCGRATTKTVTCAEILKRRLAGLHQVTRLRYRSVREVWQSLPPGPTPGQTPSDPAASLSVLKNVPSLAILLSKDALDPRQLGYQPPNLSPGPSSPPTVSTSKRSLGESAAEEGTAKRSQPEPEAENEDRTA</sequence>
<comment type="function">
    <text evidence="1">Component of ribonuclease P, a ribonucleoprotein complex that generates mature tRNA molecules by cleaving their 5'-ends. Also a component of the MRP ribonuclease complex, which cleaves pre-rRNA sequences.</text>
</comment>
<comment type="subunit">
    <text evidence="1">Component of nuclear RNase P and RNase MRP ribonucleoproteins. RNase P consists of a catalytic RNA moiety and 10 different protein chains; POP1, POP4, POP5, POP7, RPP14, RPP21, RPP25, RPP30, RPP38 and RPP40. Within the RNase P complex, POP1, POP7 and RPP25 form the 'finger' subcomplex, POP5, RPP14, RPP40 and homodimeric RPP30 form the 'palm' subcomplex, and RPP21, POP4 and RPP38 form the 'wrist' subcomplex. All subunits of the RNase P complex interact with the catalytic RNA. Several subunits of RNase P are also part of the RNase MRP complex. RNase MRP consists of a catalytic RNA moiety and about 8 protein subunits; POP1, POP7, RPP25, RPP30, RPP38, RPP40 and possibly also POP4 and POP5. POP7 forms a heterodimer with RPP25 that binds to the P3 stem loop of the catalytic RNA.</text>
</comment>
<comment type="subcellular location">
    <subcellularLocation>
        <location evidence="1">Nucleus</location>
        <location evidence="1">Nucleolus</location>
    </subcellularLocation>
</comment>
<comment type="similarity">
    <text evidence="3">Belongs to the histone-like Alba family.</text>
</comment>
<organism>
    <name type="scientific">Mus musculus</name>
    <name type="common">Mouse</name>
    <dbReference type="NCBI Taxonomy" id="10090"/>
    <lineage>
        <taxon>Eukaryota</taxon>
        <taxon>Metazoa</taxon>
        <taxon>Chordata</taxon>
        <taxon>Craniata</taxon>
        <taxon>Vertebrata</taxon>
        <taxon>Euteleostomi</taxon>
        <taxon>Mammalia</taxon>
        <taxon>Eutheria</taxon>
        <taxon>Euarchontoglires</taxon>
        <taxon>Glires</taxon>
        <taxon>Rodentia</taxon>
        <taxon>Myomorpha</taxon>
        <taxon>Muroidea</taxon>
        <taxon>Muridae</taxon>
        <taxon>Murinae</taxon>
        <taxon>Mus</taxon>
        <taxon>Mus</taxon>
    </lineage>
</organism>
<proteinExistence type="evidence at transcript level"/>
<reference key="1">
    <citation type="journal article" date="2005" name="Science">
        <title>The transcriptional landscape of the mammalian genome.</title>
        <authorList>
            <person name="Carninci P."/>
            <person name="Kasukawa T."/>
            <person name="Katayama S."/>
            <person name="Gough J."/>
            <person name="Frith M.C."/>
            <person name="Maeda N."/>
            <person name="Oyama R."/>
            <person name="Ravasi T."/>
            <person name="Lenhard B."/>
            <person name="Wells C."/>
            <person name="Kodzius R."/>
            <person name="Shimokawa K."/>
            <person name="Bajic V.B."/>
            <person name="Brenner S.E."/>
            <person name="Batalov S."/>
            <person name="Forrest A.R."/>
            <person name="Zavolan M."/>
            <person name="Davis M.J."/>
            <person name="Wilming L.G."/>
            <person name="Aidinis V."/>
            <person name="Allen J.E."/>
            <person name="Ambesi-Impiombato A."/>
            <person name="Apweiler R."/>
            <person name="Aturaliya R.N."/>
            <person name="Bailey T.L."/>
            <person name="Bansal M."/>
            <person name="Baxter L."/>
            <person name="Beisel K.W."/>
            <person name="Bersano T."/>
            <person name="Bono H."/>
            <person name="Chalk A.M."/>
            <person name="Chiu K.P."/>
            <person name="Choudhary V."/>
            <person name="Christoffels A."/>
            <person name="Clutterbuck D.R."/>
            <person name="Crowe M.L."/>
            <person name="Dalla E."/>
            <person name="Dalrymple B.P."/>
            <person name="de Bono B."/>
            <person name="Della Gatta G."/>
            <person name="di Bernardo D."/>
            <person name="Down T."/>
            <person name="Engstrom P."/>
            <person name="Fagiolini M."/>
            <person name="Faulkner G."/>
            <person name="Fletcher C.F."/>
            <person name="Fukushima T."/>
            <person name="Furuno M."/>
            <person name="Futaki S."/>
            <person name="Gariboldi M."/>
            <person name="Georgii-Hemming P."/>
            <person name="Gingeras T.R."/>
            <person name="Gojobori T."/>
            <person name="Green R.E."/>
            <person name="Gustincich S."/>
            <person name="Harbers M."/>
            <person name="Hayashi Y."/>
            <person name="Hensch T.K."/>
            <person name="Hirokawa N."/>
            <person name="Hill D."/>
            <person name="Huminiecki L."/>
            <person name="Iacono M."/>
            <person name="Ikeo K."/>
            <person name="Iwama A."/>
            <person name="Ishikawa T."/>
            <person name="Jakt M."/>
            <person name="Kanapin A."/>
            <person name="Katoh M."/>
            <person name="Kawasawa Y."/>
            <person name="Kelso J."/>
            <person name="Kitamura H."/>
            <person name="Kitano H."/>
            <person name="Kollias G."/>
            <person name="Krishnan S.P."/>
            <person name="Kruger A."/>
            <person name="Kummerfeld S.K."/>
            <person name="Kurochkin I.V."/>
            <person name="Lareau L.F."/>
            <person name="Lazarevic D."/>
            <person name="Lipovich L."/>
            <person name="Liu J."/>
            <person name="Liuni S."/>
            <person name="McWilliam S."/>
            <person name="Madan Babu M."/>
            <person name="Madera M."/>
            <person name="Marchionni L."/>
            <person name="Matsuda H."/>
            <person name="Matsuzawa S."/>
            <person name="Miki H."/>
            <person name="Mignone F."/>
            <person name="Miyake S."/>
            <person name="Morris K."/>
            <person name="Mottagui-Tabar S."/>
            <person name="Mulder N."/>
            <person name="Nakano N."/>
            <person name="Nakauchi H."/>
            <person name="Ng P."/>
            <person name="Nilsson R."/>
            <person name="Nishiguchi S."/>
            <person name="Nishikawa S."/>
            <person name="Nori F."/>
            <person name="Ohara O."/>
            <person name="Okazaki Y."/>
            <person name="Orlando V."/>
            <person name="Pang K.C."/>
            <person name="Pavan W.J."/>
            <person name="Pavesi G."/>
            <person name="Pesole G."/>
            <person name="Petrovsky N."/>
            <person name="Piazza S."/>
            <person name="Reed J."/>
            <person name="Reid J.F."/>
            <person name="Ring B.Z."/>
            <person name="Ringwald M."/>
            <person name="Rost B."/>
            <person name="Ruan Y."/>
            <person name="Salzberg S.L."/>
            <person name="Sandelin A."/>
            <person name="Schneider C."/>
            <person name="Schoenbach C."/>
            <person name="Sekiguchi K."/>
            <person name="Semple C.A."/>
            <person name="Seno S."/>
            <person name="Sessa L."/>
            <person name="Sheng Y."/>
            <person name="Shibata Y."/>
            <person name="Shimada H."/>
            <person name="Shimada K."/>
            <person name="Silva D."/>
            <person name="Sinclair B."/>
            <person name="Sperling S."/>
            <person name="Stupka E."/>
            <person name="Sugiura K."/>
            <person name="Sultana R."/>
            <person name="Takenaka Y."/>
            <person name="Taki K."/>
            <person name="Tammoja K."/>
            <person name="Tan S.L."/>
            <person name="Tang S."/>
            <person name="Taylor M.S."/>
            <person name="Tegner J."/>
            <person name="Teichmann S.A."/>
            <person name="Ueda H.R."/>
            <person name="van Nimwegen E."/>
            <person name="Verardo R."/>
            <person name="Wei C.L."/>
            <person name="Yagi K."/>
            <person name="Yamanishi H."/>
            <person name="Zabarovsky E."/>
            <person name="Zhu S."/>
            <person name="Zimmer A."/>
            <person name="Hide W."/>
            <person name="Bult C."/>
            <person name="Grimmond S.M."/>
            <person name="Teasdale R.D."/>
            <person name="Liu E.T."/>
            <person name="Brusic V."/>
            <person name="Quackenbush J."/>
            <person name="Wahlestedt C."/>
            <person name="Mattick J.S."/>
            <person name="Hume D.A."/>
            <person name="Kai C."/>
            <person name="Sasaki D."/>
            <person name="Tomaru Y."/>
            <person name="Fukuda S."/>
            <person name="Kanamori-Katayama M."/>
            <person name="Suzuki M."/>
            <person name="Aoki J."/>
            <person name="Arakawa T."/>
            <person name="Iida J."/>
            <person name="Imamura K."/>
            <person name="Itoh M."/>
            <person name="Kato T."/>
            <person name="Kawaji H."/>
            <person name="Kawagashira N."/>
            <person name="Kawashima T."/>
            <person name="Kojima M."/>
            <person name="Kondo S."/>
            <person name="Konno H."/>
            <person name="Nakano K."/>
            <person name="Ninomiya N."/>
            <person name="Nishio T."/>
            <person name="Okada M."/>
            <person name="Plessy C."/>
            <person name="Shibata K."/>
            <person name="Shiraki T."/>
            <person name="Suzuki S."/>
            <person name="Tagami M."/>
            <person name="Waki K."/>
            <person name="Watahiki A."/>
            <person name="Okamura-Oho Y."/>
            <person name="Suzuki H."/>
            <person name="Kawai J."/>
            <person name="Hayashizaki Y."/>
        </authorList>
    </citation>
    <scope>NUCLEOTIDE SEQUENCE [LARGE SCALE MRNA]</scope>
    <source>
        <strain>C57BL/6J</strain>
    </source>
</reference>
<reference key="2">
    <citation type="journal article" date="2004" name="Genome Res.">
        <title>The status, quality, and expansion of the NIH full-length cDNA project: the Mammalian Gene Collection (MGC).</title>
        <authorList>
            <consortium name="The MGC Project Team"/>
        </authorList>
    </citation>
    <scope>NUCLEOTIDE SEQUENCE [LARGE SCALE MRNA]</scope>
    <source>
        <tissue>Eye</tissue>
    </source>
</reference>
<name>RPP25_MOUSE</name>
<protein>
    <recommendedName>
        <fullName>Ribonuclease P protein subunit p25</fullName>
        <shortName>RNase P protein subunit p25</shortName>
    </recommendedName>
</protein>
<evidence type="ECO:0000250" key="1">
    <source>
        <dbReference type="UniProtKB" id="Q9BUL9"/>
    </source>
</evidence>
<evidence type="ECO:0000256" key="2">
    <source>
        <dbReference type="SAM" id="MobiDB-lite"/>
    </source>
</evidence>
<evidence type="ECO:0000305" key="3"/>
<feature type="chain" id="PRO_0000237583" description="Ribonuclease P protein subunit p25">
    <location>
        <begin position="1"/>
        <end position="199"/>
    </location>
</feature>
<feature type="region of interest" description="Disordered" evidence="2">
    <location>
        <begin position="1"/>
        <end position="31"/>
    </location>
</feature>
<feature type="region of interest" description="Disordered" evidence="2">
    <location>
        <begin position="146"/>
        <end position="199"/>
    </location>
</feature>
<feature type="compositionally biased region" description="Basic and acidic residues" evidence="2">
    <location>
        <begin position="1"/>
        <end position="11"/>
    </location>
</feature>
<feature type="compositionally biased region" description="Acidic residues" evidence="2">
    <location>
        <begin position="190"/>
        <end position="199"/>
    </location>
</feature>
<feature type="modified residue" description="Phosphoserine" evidence="1">
    <location>
        <position position="172"/>
    </location>
</feature>
<keyword id="KW-0539">Nucleus</keyword>
<keyword id="KW-0597">Phosphoprotein</keyword>
<keyword id="KW-1185">Reference proteome</keyword>
<keyword id="KW-0694">RNA-binding</keyword>
<keyword id="KW-0698">rRNA processing</keyword>
<keyword id="KW-0819">tRNA processing</keyword>
<accession>Q91WE3</accession>